<comment type="function">
    <text evidence="2">Key enzyme in myo-inositol biosynthesis pathway that catalyzes the conversion of glucose 6-phosphate to 1-myo-inositol 1-phosphate in a NAD-dependent manner.</text>
</comment>
<comment type="catalytic activity">
    <reaction evidence="2">
        <text>D-glucose 6-phosphate = 1D-myo-inositol 3-phosphate</text>
        <dbReference type="Rhea" id="RHEA:10716"/>
        <dbReference type="ChEBI" id="CHEBI:58401"/>
        <dbReference type="ChEBI" id="CHEBI:61548"/>
        <dbReference type="EC" id="5.5.1.4"/>
    </reaction>
</comment>
<comment type="cofactor">
    <cofactor evidence="2">
        <name>NAD(+)</name>
        <dbReference type="ChEBI" id="CHEBI:57540"/>
    </cofactor>
</comment>
<comment type="pathway">
    <text>Polyol metabolism; myo-inositol biosynthesis; myo-inositol from D-glucose 6-phosphate: step 1/2.</text>
</comment>
<comment type="subcellular location">
    <subcellularLocation>
        <location evidence="2">Cytoplasm</location>
        <location evidence="2">Cytosol</location>
    </subcellularLocation>
    <subcellularLocation>
        <location evidence="2">Nucleus</location>
    </subcellularLocation>
</comment>
<comment type="similarity">
    <text evidence="3">Belongs to the myo-inositol 1-phosphate synthase family.</text>
</comment>
<protein>
    <recommendedName>
        <fullName>Inositol-3-phosphate synthase</fullName>
        <shortName>MIP synthase</shortName>
        <ecNumber evidence="2">5.5.1.4</ecNumber>
    </recommendedName>
    <alternativeName>
        <fullName>Myo-inositol 1-phosphate synthase</fullName>
        <shortName>IPS</shortName>
        <shortName>MI-1-P synthase</shortName>
    </alternativeName>
</protein>
<accession>P42802</accession>
<organism>
    <name type="scientific">Citrus paradisi</name>
    <name type="common">Grapefruit</name>
    <dbReference type="NCBI Taxonomy" id="37656"/>
    <lineage>
        <taxon>Eukaryota</taxon>
        <taxon>Viridiplantae</taxon>
        <taxon>Streptophyta</taxon>
        <taxon>Embryophyta</taxon>
        <taxon>Tracheophyta</taxon>
        <taxon>Spermatophyta</taxon>
        <taxon>Magnoliopsida</taxon>
        <taxon>eudicotyledons</taxon>
        <taxon>Gunneridae</taxon>
        <taxon>Pentapetalae</taxon>
        <taxon>rosids</taxon>
        <taxon>malvids</taxon>
        <taxon>Sapindales</taxon>
        <taxon>Rutaceae</taxon>
        <taxon>Aurantioideae</taxon>
        <taxon>Citrus</taxon>
    </lineage>
</organism>
<evidence type="ECO:0000250" key="1">
    <source>
        <dbReference type="UniProtKB" id="P11986"/>
    </source>
</evidence>
<evidence type="ECO:0000250" key="2">
    <source>
        <dbReference type="UniProtKB" id="P42801"/>
    </source>
</evidence>
<evidence type="ECO:0000305" key="3"/>
<feature type="chain" id="PRO_0000195190" description="Inositol-3-phosphate synthase">
    <location>
        <begin position="1"/>
        <end position="507"/>
    </location>
</feature>
<feature type="binding site" evidence="1">
    <location>
        <position position="70"/>
    </location>
    <ligand>
        <name>NAD(+)</name>
        <dbReference type="ChEBI" id="CHEBI:57540"/>
    </ligand>
</feature>
<feature type="binding site" evidence="1">
    <location>
        <position position="71"/>
    </location>
    <ligand>
        <name>NAD(+)</name>
        <dbReference type="ChEBI" id="CHEBI:57540"/>
    </ligand>
</feature>
<feature type="binding site" evidence="1">
    <location>
        <position position="72"/>
    </location>
    <ligand>
        <name>NAD(+)</name>
        <dbReference type="ChEBI" id="CHEBI:57540"/>
    </ligand>
</feature>
<feature type="binding site" evidence="1">
    <location>
        <position position="73"/>
    </location>
    <ligand>
        <name>NAD(+)</name>
        <dbReference type="ChEBI" id="CHEBI:57540"/>
    </ligand>
</feature>
<feature type="binding site" evidence="1">
    <location>
        <position position="143"/>
    </location>
    <ligand>
        <name>NAD(+)</name>
        <dbReference type="ChEBI" id="CHEBI:57540"/>
    </ligand>
</feature>
<feature type="binding site" evidence="1">
    <location>
        <position position="180"/>
    </location>
    <ligand>
        <name>NAD(+)</name>
        <dbReference type="ChEBI" id="CHEBI:57540"/>
    </ligand>
</feature>
<feature type="binding site" evidence="1">
    <location>
        <position position="190"/>
    </location>
    <ligand>
        <name>NAD(+)</name>
        <dbReference type="ChEBI" id="CHEBI:57540"/>
    </ligand>
</feature>
<feature type="binding site" evidence="1">
    <location>
        <position position="193"/>
    </location>
    <ligand>
        <name>NAD(+)</name>
        <dbReference type="ChEBI" id="CHEBI:57540"/>
    </ligand>
</feature>
<feature type="binding site" evidence="1">
    <location>
        <position position="230"/>
    </location>
    <ligand>
        <name>NAD(+)</name>
        <dbReference type="ChEBI" id="CHEBI:57540"/>
    </ligand>
</feature>
<feature type="binding site" evidence="1">
    <location>
        <position position="231"/>
    </location>
    <ligand>
        <name>NAD(+)</name>
        <dbReference type="ChEBI" id="CHEBI:57540"/>
    </ligand>
</feature>
<feature type="binding site" evidence="1">
    <location>
        <position position="232"/>
    </location>
    <ligand>
        <name>NAD(+)</name>
        <dbReference type="ChEBI" id="CHEBI:57540"/>
    </ligand>
</feature>
<feature type="binding site" evidence="1">
    <location>
        <position position="233"/>
    </location>
    <ligand>
        <name>NAD(+)</name>
        <dbReference type="ChEBI" id="CHEBI:57540"/>
    </ligand>
</feature>
<feature type="binding site" evidence="1">
    <location>
        <position position="281"/>
    </location>
    <ligand>
        <name>NAD(+)</name>
        <dbReference type="ChEBI" id="CHEBI:57540"/>
    </ligand>
</feature>
<feature type="binding site" evidence="1">
    <location>
        <position position="282"/>
    </location>
    <ligand>
        <name>NAD(+)</name>
        <dbReference type="ChEBI" id="CHEBI:57540"/>
    </ligand>
</feature>
<feature type="binding site" evidence="1">
    <location>
        <position position="306"/>
    </location>
    <ligand>
        <name>NAD(+)</name>
        <dbReference type="ChEBI" id="CHEBI:57540"/>
    </ligand>
</feature>
<feature type="binding site" evidence="1">
    <location>
        <position position="309"/>
    </location>
    <ligand>
        <name>NAD(+)</name>
        <dbReference type="ChEBI" id="CHEBI:57540"/>
    </ligand>
</feature>
<feature type="binding site" evidence="1">
    <location>
        <position position="340"/>
    </location>
    <ligand>
        <name>NAD(+)</name>
        <dbReference type="ChEBI" id="CHEBI:57540"/>
    </ligand>
</feature>
<feature type="binding site" evidence="1">
    <location>
        <position position="341"/>
    </location>
    <ligand>
        <name>NAD(+)</name>
        <dbReference type="ChEBI" id="CHEBI:57540"/>
    </ligand>
</feature>
<feature type="binding site" evidence="1">
    <location>
        <position position="342"/>
    </location>
    <ligand>
        <name>NAD(+)</name>
        <dbReference type="ChEBI" id="CHEBI:57540"/>
    </ligand>
</feature>
<feature type="binding site" evidence="1">
    <location>
        <position position="355"/>
    </location>
    <ligand>
        <name>NAD(+)</name>
        <dbReference type="ChEBI" id="CHEBI:57540"/>
    </ligand>
</feature>
<feature type="binding site" evidence="1">
    <location>
        <position position="391"/>
    </location>
    <ligand>
        <name>NAD(+)</name>
        <dbReference type="ChEBI" id="CHEBI:57540"/>
    </ligand>
</feature>
<feature type="binding site" evidence="1">
    <location>
        <position position="419"/>
    </location>
    <ligand>
        <name>NAD(+)</name>
        <dbReference type="ChEBI" id="CHEBI:57540"/>
    </ligand>
</feature>
<feature type="binding site" evidence="1">
    <location>
        <position position="420"/>
    </location>
    <ligand>
        <name>NAD(+)</name>
        <dbReference type="ChEBI" id="CHEBI:57540"/>
    </ligand>
</feature>
<name>INO1_CITPA</name>
<proteinExistence type="inferred from homology"/>
<sequence length="507" mass="56335">MFIENFKVESPNVKYTDHEIHSVYDYETTELVHENRNGTYQWIVKPKTVKYEFKTDVHVPKLGVMLVGWGGNNGSTLTGGVIANREGICWATKDTVQQANYFGSLTQASAIRVGSYNGEEIYAPFKSILPMVNPDDIVFGGWDISDMNLADAMARARVFDIDLQKQLRPYMESMVPLPGIYDPDFIAANQGSRANNVIKGTKKEQMLQIIKDIREFKEKNKVDRVVVLWTANTERYSNVIVGLNDTVESLLASLDKNEAEISPSTLYAIACVLENIPFINGSPQNTFVPGLIDLAIRRNCLIGGDDFKSGQTKMKSVLVDFLVGAGIKPTSIVSYNHLGNNDGMNLSAPQTFRSKEISKSNVVDDMVSSNVFFMGLVNTRPRWIKYVPYVAIERAMDEYTSEIFMGGKSTIVLHNTCEDSLLAAPIILDLVLLAELSTRIQLKAEGEGKFHSFHPVATILSYLTKAPLVPPGTPVVNALSKQRAMLENILRACVGLAPENNMILEYK</sequence>
<keyword id="KW-0963">Cytoplasm</keyword>
<keyword id="KW-0398">Inositol biosynthesis</keyword>
<keyword id="KW-0413">Isomerase</keyword>
<keyword id="KW-0444">Lipid biosynthesis</keyword>
<keyword id="KW-0443">Lipid metabolism</keyword>
<keyword id="KW-0520">NAD</keyword>
<keyword id="KW-0539">Nucleus</keyword>
<keyword id="KW-0594">Phospholipid biosynthesis</keyword>
<keyword id="KW-1208">Phospholipid metabolism</keyword>
<dbReference type="EC" id="5.5.1.4" evidence="2"/>
<dbReference type="EMBL" id="Z32632">
    <property type="protein sequence ID" value="CAA83565.1"/>
    <property type="molecule type" value="Genomic_DNA"/>
</dbReference>
<dbReference type="PIR" id="S52648">
    <property type="entry name" value="S52648"/>
</dbReference>
<dbReference type="SMR" id="P42802"/>
<dbReference type="UniPathway" id="UPA00823">
    <property type="reaction ID" value="UER00787"/>
</dbReference>
<dbReference type="GO" id="GO:0005829">
    <property type="term" value="C:cytosol"/>
    <property type="evidence" value="ECO:0007669"/>
    <property type="project" value="UniProtKB-SubCell"/>
</dbReference>
<dbReference type="GO" id="GO:0005634">
    <property type="term" value="C:nucleus"/>
    <property type="evidence" value="ECO:0007669"/>
    <property type="project" value="UniProtKB-SubCell"/>
</dbReference>
<dbReference type="GO" id="GO:0004512">
    <property type="term" value="F:inositol-3-phosphate synthase activity"/>
    <property type="evidence" value="ECO:0007669"/>
    <property type="project" value="UniProtKB-EC"/>
</dbReference>
<dbReference type="GO" id="GO:0006021">
    <property type="term" value="P:inositol biosynthetic process"/>
    <property type="evidence" value="ECO:0007669"/>
    <property type="project" value="UniProtKB-UniPathway"/>
</dbReference>
<dbReference type="GO" id="GO:0008654">
    <property type="term" value="P:phospholipid biosynthetic process"/>
    <property type="evidence" value="ECO:0007669"/>
    <property type="project" value="UniProtKB-KW"/>
</dbReference>
<dbReference type="FunFam" id="3.40.50.720:FF:000107">
    <property type="entry name" value="inositol-3-phosphate synthase"/>
    <property type="match status" value="1"/>
</dbReference>
<dbReference type="FunFam" id="3.40.50.720:FF:000069">
    <property type="entry name" value="Inositol-3-phosphate synthase 1"/>
    <property type="match status" value="1"/>
</dbReference>
<dbReference type="FunFam" id="3.30.360.10:FF:000055">
    <property type="entry name" value="Putative myo-inositol-1-phosphate synthase"/>
    <property type="match status" value="1"/>
</dbReference>
<dbReference type="Gene3D" id="3.40.50.720">
    <property type="entry name" value="NAD(P)-binding Rossmann-like Domain"/>
    <property type="match status" value="2"/>
</dbReference>
<dbReference type="InterPro" id="IPR002587">
    <property type="entry name" value="Myo-inos-1-P_Synthase"/>
</dbReference>
<dbReference type="InterPro" id="IPR013021">
    <property type="entry name" value="Myo-inos-1-P_Synthase_GAPDH"/>
</dbReference>
<dbReference type="InterPro" id="IPR036291">
    <property type="entry name" value="NAD(P)-bd_dom_sf"/>
</dbReference>
<dbReference type="PANTHER" id="PTHR11510">
    <property type="entry name" value="MYO-INOSITOL-1 PHOSPHATE SYNTHASE"/>
    <property type="match status" value="1"/>
</dbReference>
<dbReference type="Pfam" id="PF01658">
    <property type="entry name" value="Inos-1-P_synth"/>
    <property type="match status" value="1"/>
</dbReference>
<dbReference type="Pfam" id="PF07994">
    <property type="entry name" value="NAD_binding_5"/>
    <property type="match status" value="1"/>
</dbReference>
<dbReference type="PIRSF" id="PIRSF015578">
    <property type="entry name" value="Myoinos-ppht_syn"/>
    <property type="match status" value="1"/>
</dbReference>
<dbReference type="SUPFAM" id="SSF55347">
    <property type="entry name" value="Glyceraldehyde-3-phosphate dehydrogenase-like, C-terminal domain"/>
    <property type="match status" value="1"/>
</dbReference>
<dbReference type="SUPFAM" id="SSF51735">
    <property type="entry name" value="NAD(P)-binding Rossmann-fold domains"/>
    <property type="match status" value="1"/>
</dbReference>
<reference key="1">
    <citation type="journal article" date="1994" name="Plant Physiol.">
        <title>The gene c-ino1 from Citrus paradisi is highly homologous to tur1 and ino1 from yeast and Spirodela encoding for myo-inositol phosphate synthase.</title>
        <authorList>
            <person name="Abu-Abied M."/>
            <person name="Holland D."/>
        </authorList>
    </citation>
    <scope>NUCLEOTIDE SEQUENCE [GENOMIC DNA]</scope>
    <source>
        <tissue>Leaf</tissue>
    </source>
</reference>